<sequence length="150" mass="17340">MIVEEIQGNIANLSNSEKQKHVEKVYLENSDLVKRIQRVVTDHGTEIGIRLKQPIDLQYGDILYADDHNMIIVDVNSEDLLVIQPRTLQEMGDIAHQLGNRHLPAQFTETEMLVQYDYLVEDLLKSLGIPYVREDRKVNKAFRHIGHSHD</sequence>
<organism>
    <name type="scientific">Staphylococcus aureus (strain USA300 / TCH1516)</name>
    <dbReference type="NCBI Taxonomy" id="451516"/>
    <lineage>
        <taxon>Bacteria</taxon>
        <taxon>Bacillati</taxon>
        <taxon>Bacillota</taxon>
        <taxon>Bacilli</taxon>
        <taxon>Bacillales</taxon>
        <taxon>Staphylococcaceae</taxon>
        <taxon>Staphylococcus</taxon>
    </lineage>
</organism>
<name>UREE_STAAT</name>
<proteinExistence type="inferred from homology"/>
<keyword id="KW-0143">Chaperone</keyword>
<keyword id="KW-0963">Cytoplasm</keyword>
<keyword id="KW-0533">Nickel</keyword>
<keyword id="KW-0996">Nickel insertion</keyword>
<feature type="chain" id="PRO_1000083913" description="Urease accessory protein UreE">
    <location>
        <begin position="1"/>
        <end position="150"/>
    </location>
</feature>
<accession>A8Z388</accession>
<dbReference type="EMBL" id="CP000730">
    <property type="protein sequence ID" value="ABX30265.1"/>
    <property type="molecule type" value="Genomic_DNA"/>
</dbReference>
<dbReference type="RefSeq" id="WP_000634589.1">
    <property type="nucleotide sequence ID" value="NC_010079.1"/>
</dbReference>
<dbReference type="SMR" id="A8Z388"/>
<dbReference type="KEGG" id="sax:USA300HOU_2272"/>
<dbReference type="HOGENOM" id="CLU_093757_3_1_9"/>
<dbReference type="GO" id="GO:0005737">
    <property type="term" value="C:cytoplasm"/>
    <property type="evidence" value="ECO:0007669"/>
    <property type="project" value="UniProtKB-SubCell"/>
</dbReference>
<dbReference type="GO" id="GO:0016151">
    <property type="term" value="F:nickel cation binding"/>
    <property type="evidence" value="ECO:0007669"/>
    <property type="project" value="UniProtKB-UniRule"/>
</dbReference>
<dbReference type="GO" id="GO:0051082">
    <property type="term" value="F:unfolded protein binding"/>
    <property type="evidence" value="ECO:0007669"/>
    <property type="project" value="UniProtKB-UniRule"/>
</dbReference>
<dbReference type="GO" id="GO:0006457">
    <property type="term" value="P:protein folding"/>
    <property type="evidence" value="ECO:0007669"/>
    <property type="project" value="InterPro"/>
</dbReference>
<dbReference type="GO" id="GO:0065003">
    <property type="term" value="P:protein-containing complex assembly"/>
    <property type="evidence" value="ECO:0007669"/>
    <property type="project" value="InterPro"/>
</dbReference>
<dbReference type="GO" id="GO:0019627">
    <property type="term" value="P:urea metabolic process"/>
    <property type="evidence" value="ECO:0007669"/>
    <property type="project" value="InterPro"/>
</dbReference>
<dbReference type="CDD" id="cd00571">
    <property type="entry name" value="UreE"/>
    <property type="match status" value="1"/>
</dbReference>
<dbReference type="Gene3D" id="2.60.260.20">
    <property type="entry name" value="Urease metallochaperone UreE, N-terminal domain"/>
    <property type="match status" value="1"/>
</dbReference>
<dbReference type="Gene3D" id="3.30.70.790">
    <property type="entry name" value="UreE, C-terminal domain"/>
    <property type="match status" value="1"/>
</dbReference>
<dbReference type="HAMAP" id="MF_00822">
    <property type="entry name" value="UreE"/>
    <property type="match status" value="1"/>
</dbReference>
<dbReference type="InterPro" id="IPR012406">
    <property type="entry name" value="UreE"/>
</dbReference>
<dbReference type="InterPro" id="IPR007864">
    <property type="entry name" value="UreE_C_dom"/>
</dbReference>
<dbReference type="InterPro" id="IPR004029">
    <property type="entry name" value="UreE_N"/>
</dbReference>
<dbReference type="InterPro" id="IPR036118">
    <property type="entry name" value="UreE_N_sf"/>
</dbReference>
<dbReference type="NCBIfam" id="NF009755">
    <property type="entry name" value="PRK13261.2-1"/>
    <property type="match status" value="1"/>
</dbReference>
<dbReference type="Pfam" id="PF05194">
    <property type="entry name" value="UreE_C"/>
    <property type="match status" value="1"/>
</dbReference>
<dbReference type="Pfam" id="PF02814">
    <property type="entry name" value="UreE_N"/>
    <property type="match status" value="1"/>
</dbReference>
<dbReference type="PIRSF" id="PIRSF036402">
    <property type="entry name" value="Ureas_acces_UreE"/>
    <property type="match status" value="1"/>
</dbReference>
<dbReference type="SMART" id="SM00988">
    <property type="entry name" value="UreE_N"/>
    <property type="match status" value="1"/>
</dbReference>
<dbReference type="SUPFAM" id="SSF69737">
    <property type="entry name" value="Urease metallochaperone UreE, C-terminal domain"/>
    <property type="match status" value="1"/>
</dbReference>
<dbReference type="SUPFAM" id="SSF69287">
    <property type="entry name" value="Urease metallochaperone UreE, N-terminal domain"/>
    <property type="match status" value="1"/>
</dbReference>
<protein>
    <recommendedName>
        <fullName evidence="1">Urease accessory protein UreE</fullName>
    </recommendedName>
</protein>
<evidence type="ECO:0000255" key="1">
    <source>
        <dbReference type="HAMAP-Rule" id="MF_00822"/>
    </source>
</evidence>
<gene>
    <name evidence="1" type="primary">ureE</name>
    <name type="ordered locus">USA300HOU_2272</name>
</gene>
<comment type="function">
    <text evidence="1">Involved in urease metallocenter assembly. Binds nickel. Probably functions as a nickel donor during metallocenter assembly.</text>
</comment>
<comment type="subcellular location">
    <subcellularLocation>
        <location evidence="1">Cytoplasm</location>
    </subcellularLocation>
</comment>
<comment type="similarity">
    <text evidence="1">Belongs to the UreE family.</text>
</comment>
<reference key="1">
    <citation type="journal article" date="2007" name="BMC Microbiol.">
        <title>Subtle genetic changes enhance virulence of methicillin resistant and sensitive Staphylococcus aureus.</title>
        <authorList>
            <person name="Highlander S.K."/>
            <person name="Hulten K.G."/>
            <person name="Qin X."/>
            <person name="Jiang H."/>
            <person name="Yerrapragada S."/>
            <person name="Mason E.O. Jr."/>
            <person name="Shang Y."/>
            <person name="Williams T.M."/>
            <person name="Fortunov R.M."/>
            <person name="Liu Y."/>
            <person name="Igboeli O."/>
            <person name="Petrosino J."/>
            <person name="Tirumalai M."/>
            <person name="Uzman A."/>
            <person name="Fox G.E."/>
            <person name="Cardenas A.M."/>
            <person name="Muzny D.M."/>
            <person name="Hemphill L."/>
            <person name="Ding Y."/>
            <person name="Dugan S."/>
            <person name="Blyth P.R."/>
            <person name="Buhay C.J."/>
            <person name="Dinh H.H."/>
            <person name="Hawes A.C."/>
            <person name="Holder M."/>
            <person name="Kovar C.L."/>
            <person name="Lee S.L."/>
            <person name="Liu W."/>
            <person name="Nazareth L.V."/>
            <person name="Wang Q."/>
            <person name="Zhou J."/>
            <person name="Kaplan S.L."/>
            <person name="Weinstock G.M."/>
        </authorList>
    </citation>
    <scope>NUCLEOTIDE SEQUENCE [LARGE SCALE GENOMIC DNA]</scope>
    <source>
        <strain>USA300 / TCH1516</strain>
    </source>
</reference>